<reference key="1">
    <citation type="journal article" date="2018" name="Planta">
        <title>Biochemical characterization of rice xylan O-acetyltransferases.</title>
        <authorList>
            <person name="Zhong R."/>
            <person name="Cui D."/>
            <person name="Dasher R.L."/>
            <person name="Ye Z.H."/>
        </authorList>
    </citation>
    <scope>NUCLEOTIDE SEQUENCE [MRNA]</scope>
    <scope>FUNCTION</scope>
    <scope>CATALYTIC ACTIVITY</scope>
    <scope>BIOPHYSICOCHEMICAL PROPERTIES</scope>
    <scope>TISSUE SPECIFICITY</scope>
</reference>
<reference key="2">
    <citation type="journal article" date="2002" name="Nature">
        <title>The genome sequence and structure of rice chromosome 1.</title>
        <authorList>
            <person name="Sasaki T."/>
            <person name="Matsumoto T."/>
            <person name="Yamamoto K."/>
            <person name="Sakata K."/>
            <person name="Baba T."/>
            <person name="Katayose Y."/>
            <person name="Wu J."/>
            <person name="Niimura Y."/>
            <person name="Cheng Z."/>
            <person name="Nagamura Y."/>
            <person name="Antonio B.A."/>
            <person name="Kanamori H."/>
            <person name="Hosokawa S."/>
            <person name="Masukawa M."/>
            <person name="Arikawa K."/>
            <person name="Chiden Y."/>
            <person name="Hayashi M."/>
            <person name="Okamoto M."/>
            <person name="Ando T."/>
            <person name="Aoki H."/>
            <person name="Arita K."/>
            <person name="Hamada M."/>
            <person name="Harada C."/>
            <person name="Hijishita S."/>
            <person name="Honda M."/>
            <person name="Ichikawa Y."/>
            <person name="Idonuma A."/>
            <person name="Iijima M."/>
            <person name="Ikeda M."/>
            <person name="Ikeno M."/>
            <person name="Ito S."/>
            <person name="Ito T."/>
            <person name="Ito Y."/>
            <person name="Ito Y."/>
            <person name="Iwabuchi A."/>
            <person name="Kamiya K."/>
            <person name="Karasawa W."/>
            <person name="Katagiri S."/>
            <person name="Kikuta A."/>
            <person name="Kobayashi N."/>
            <person name="Kono I."/>
            <person name="Machita K."/>
            <person name="Maehara T."/>
            <person name="Mizuno H."/>
            <person name="Mizubayashi T."/>
            <person name="Mukai Y."/>
            <person name="Nagasaki H."/>
            <person name="Nakashima M."/>
            <person name="Nakama Y."/>
            <person name="Nakamichi Y."/>
            <person name="Nakamura M."/>
            <person name="Namiki N."/>
            <person name="Negishi M."/>
            <person name="Ohta I."/>
            <person name="Ono N."/>
            <person name="Saji S."/>
            <person name="Sakai K."/>
            <person name="Shibata M."/>
            <person name="Shimokawa T."/>
            <person name="Shomura A."/>
            <person name="Song J."/>
            <person name="Takazaki Y."/>
            <person name="Terasawa K."/>
            <person name="Tsuji K."/>
            <person name="Waki K."/>
            <person name="Yamagata H."/>
            <person name="Yamane H."/>
            <person name="Yoshiki S."/>
            <person name="Yoshihara R."/>
            <person name="Yukawa K."/>
            <person name="Zhong H."/>
            <person name="Iwama H."/>
            <person name="Endo T."/>
            <person name="Ito H."/>
            <person name="Hahn J.H."/>
            <person name="Kim H.-I."/>
            <person name="Eun M.-Y."/>
            <person name="Yano M."/>
            <person name="Jiang J."/>
            <person name="Gojobori T."/>
        </authorList>
    </citation>
    <scope>NUCLEOTIDE SEQUENCE [LARGE SCALE GENOMIC DNA]</scope>
    <source>
        <strain>cv. Nipponbare</strain>
    </source>
</reference>
<reference key="3">
    <citation type="journal article" date="2005" name="Nature">
        <title>The map-based sequence of the rice genome.</title>
        <authorList>
            <consortium name="International rice genome sequencing project (IRGSP)"/>
        </authorList>
    </citation>
    <scope>NUCLEOTIDE SEQUENCE [LARGE SCALE GENOMIC DNA]</scope>
    <source>
        <strain>cv. Nipponbare</strain>
    </source>
</reference>
<reference key="4">
    <citation type="journal article" date="2008" name="Nucleic Acids Res.">
        <title>The rice annotation project database (RAP-DB): 2008 update.</title>
        <authorList>
            <consortium name="The rice annotation project (RAP)"/>
        </authorList>
    </citation>
    <scope>GENOME REANNOTATION</scope>
    <source>
        <strain>cv. Nipponbare</strain>
    </source>
</reference>
<reference key="5">
    <citation type="journal article" date="2013" name="Rice">
        <title>Improvement of the Oryza sativa Nipponbare reference genome using next generation sequence and optical map data.</title>
        <authorList>
            <person name="Kawahara Y."/>
            <person name="de la Bastide M."/>
            <person name="Hamilton J.P."/>
            <person name="Kanamori H."/>
            <person name="McCombie W.R."/>
            <person name="Ouyang S."/>
            <person name="Schwartz D.C."/>
            <person name="Tanaka T."/>
            <person name="Wu J."/>
            <person name="Zhou S."/>
            <person name="Childs K.L."/>
            <person name="Davidson R.M."/>
            <person name="Lin H."/>
            <person name="Quesada-Ocampo L."/>
            <person name="Vaillancourt B."/>
            <person name="Sakai H."/>
            <person name="Lee S.S."/>
            <person name="Kim J."/>
            <person name="Numa H."/>
            <person name="Itoh T."/>
            <person name="Buell C.R."/>
            <person name="Matsumoto T."/>
        </authorList>
    </citation>
    <scope>GENOME REANNOTATION</scope>
    <source>
        <strain>cv. Nipponbare</strain>
    </source>
</reference>
<reference key="6">
    <citation type="journal article" date="2003" name="Science">
        <title>Collection, mapping, and annotation of over 28,000 cDNA clones from japonica rice.</title>
        <authorList>
            <consortium name="The rice full-length cDNA consortium"/>
        </authorList>
    </citation>
    <scope>NUCLEOTIDE SEQUENCE [LARGE SCALE MRNA]</scope>
    <source>
        <strain>cv. Nipponbare</strain>
    </source>
</reference>
<reference key="7">
    <citation type="journal article" date="2017" name="Plant Physiol.">
        <title>Two trichome birefringence-like proteins mediate xylan acetylation, which is essential for leaf blight resistance in rice.</title>
        <authorList>
            <person name="Gao Y."/>
            <person name="He C."/>
            <person name="Zhang D."/>
            <person name="Liu X."/>
            <person name="Xu Z."/>
            <person name="Tian Y."/>
            <person name="Liu X.H."/>
            <person name="Zang S."/>
            <person name="Pauly M."/>
            <person name="Zhou Y."/>
            <person name="Zhang B."/>
        </authorList>
    </citation>
    <scope>GENE FAMILY</scope>
    <scope>NOMENCLATURE</scope>
</reference>
<comment type="function">
    <text evidence="2 6">Xylan acetyltransferase required for 2-O- and 3-O-monoacetylation of xylosyl residues in xylan (PubMed:29569182). Catalyzes the 2-O-acetylation of xylan, followed by nonenzymatic acetyl migration to the O-3 position, resulting in products that are monoacetylated at both O-2 and O-3 positions (By similarity).</text>
</comment>
<comment type="biophysicochemical properties">
    <kinetics>
        <KM evidence="6">39 uM for xylohexaose</KM>
        <Vmax evidence="6">40.4 pmol/min/mg enzyme with xylohexaose as substrate</Vmax>
    </kinetics>
</comment>
<comment type="subcellular location">
    <subcellularLocation>
        <location evidence="1">Golgi apparatus membrane</location>
        <topology evidence="3">Single-pass type II membrane protein</topology>
    </subcellularLocation>
</comment>
<comment type="tissue specificity">
    <text evidence="6">Expressed in roots, leaves and inflorescences.</text>
</comment>
<comment type="similarity">
    <text evidence="9">Belongs to the PC-esterase family. TBL subfamily.</text>
</comment>
<gene>
    <name evidence="8" type="primary">XOAT1</name>
    <name evidence="8" type="synonym">TBL12</name>
    <name evidence="12" type="ordered locus">Os01g0830700</name>
    <name evidence="9" type="ordered locus">LOC_Os01g61460</name>
    <name evidence="11" type="ORF">P0446G04.22</name>
</gene>
<evidence type="ECO:0000250" key="1">
    <source>
        <dbReference type="UniProtKB" id="Q2QYU2"/>
    </source>
</evidence>
<evidence type="ECO:0000250" key="2">
    <source>
        <dbReference type="UniProtKB" id="Q9LY46"/>
    </source>
</evidence>
<evidence type="ECO:0000255" key="3"/>
<evidence type="ECO:0000255" key="4">
    <source>
        <dbReference type="PROSITE-ProRule" id="PRU00498"/>
    </source>
</evidence>
<evidence type="ECO:0000256" key="5">
    <source>
        <dbReference type="SAM" id="MobiDB-lite"/>
    </source>
</evidence>
<evidence type="ECO:0000269" key="6">
    <source>
    </source>
</evidence>
<evidence type="ECO:0000303" key="7">
    <source>
    </source>
</evidence>
<evidence type="ECO:0000303" key="8">
    <source>
    </source>
</evidence>
<evidence type="ECO:0000305" key="9"/>
<evidence type="ECO:0000305" key="10">
    <source>
    </source>
</evidence>
<evidence type="ECO:0000312" key="11">
    <source>
        <dbReference type="EMBL" id="BAB89591.1"/>
    </source>
</evidence>
<evidence type="ECO:0000312" key="12">
    <source>
        <dbReference type="EMBL" id="BAS75052.1"/>
    </source>
</evidence>
<proteinExistence type="evidence at protein level"/>
<feature type="chain" id="PRO_0000454025" description="Xylan O-acetyltransferase 1">
    <location>
        <begin position="1"/>
        <end position="522"/>
    </location>
</feature>
<feature type="topological domain" description="Cytoplasmic" evidence="9">
    <location>
        <begin position="1"/>
        <end position="37"/>
    </location>
</feature>
<feature type="transmembrane region" description="Helical; Signal-anchor for type II membrane protein" evidence="3">
    <location>
        <begin position="38"/>
        <end position="58"/>
    </location>
</feature>
<feature type="topological domain" description="Lumenal" evidence="9">
    <location>
        <begin position="59"/>
        <end position="522"/>
    </location>
</feature>
<feature type="region of interest" description="Disordered" evidence="5">
    <location>
        <begin position="111"/>
        <end position="157"/>
    </location>
</feature>
<feature type="short sequence motif" description="GDS motif" evidence="10">
    <location>
        <begin position="245"/>
        <end position="247"/>
    </location>
</feature>
<feature type="short sequence motif" description="DXXH motif" evidence="10">
    <location>
        <begin position="494"/>
        <end position="497"/>
    </location>
</feature>
<feature type="compositionally biased region" description="Basic and acidic residues" evidence="5">
    <location>
        <begin position="124"/>
        <end position="134"/>
    </location>
</feature>
<feature type="compositionally biased region" description="Basic residues" evidence="5">
    <location>
        <begin position="135"/>
        <end position="154"/>
    </location>
</feature>
<feature type="active site" description="Nucleophile" evidence="2">
    <location>
        <position position="247"/>
    </location>
</feature>
<feature type="active site" description="Proton donor" evidence="2">
    <location>
        <position position="494"/>
    </location>
</feature>
<feature type="active site" description="Proton acceptor" evidence="2">
    <location>
        <position position="497"/>
    </location>
</feature>
<feature type="glycosylation site" description="N-linked (GlcNAc...) asparagine" evidence="4">
    <location>
        <position position="182"/>
    </location>
</feature>
<feature type="glycosylation site" description="N-linked (GlcNAc...) asparagine" evidence="4">
    <location>
        <position position="286"/>
    </location>
</feature>
<feature type="glycosylation site" description="N-linked (GlcNAc...) asparagine" evidence="4">
    <location>
        <position position="442"/>
    </location>
</feature>
<feature type="disulfide bond" evidence="2">
    <location>
        <begin position="171"/>
        <end position="222"/>
    </location>
</feature>
<feature type="disulfide bond" evidence="2">
    <location>
        <begin position="193"/>
        <end position="258"/>
    </location>
</feature>
<feature type="disulfide bond" evidence="2">
    <location>
        <begin position="202"/>
        <end position="499"/>
    </location>
</feature>
<feature type="disulfide bond" evidence="2">
    <location>
        <begin position="414"/>
        <end position="495"/>
    </location>
</feature>
<organism>
    <name type="scientific">Oryza sativa subsp. japonica</name>
    <name type="common">Rice</name>
    <dbReference type="NCBI Taxonomy" id="39947"/>
    <lineage>
        <taxon>Eukaryota</taxon>
        <taxon>Viridiplantae</taxon>
        <taxon>Streptophyta</taxon>
        <taxon>Embryophyta</taxon>
        <taxon>Tracheophyta</taxon>
        <taxon>Spermatophyta</taxon>
        <taxon>Magnoliopsida</taxon>
        <taxon>Liliopsida</taxon>
        <taxon>Poales</taxon>
        <taxon>Poaceae</taxon>
        <taxon>BOP clade</taxon>
        <taxon>Oryzoideae</taxon>
        <taxon>Oryzeae</taxon>
        <taxon>Oryzinae</taxon>
        <taxon>Oryza</taxon>
        <taxon>Oryza sativa</taxon>
    </lineage>
</organism>
<keyword id="KW-1015">Disulfide bond</keyword>
<keyword id="KW-0325">Glycoprotein</keyword>
<keyword id="KW-0333">Golgi apparatus</keyword>
<keyword id="KW-0472">Membrane</keyword>
<keyword id="KW-1185">Reference proteome</keyword>
<keyword id="KW-0735">Signal-anchor</keyword>
<keyword id="KW-0808">Transferase</keyword>
<keyword id="KW-0812">Transmembrane</keyword>
<keyword id="KW-1133">Transmembrane helix</keyword>
<sequence length="522" mass="59274">MANRRKFSQAGGGGGGGVFDPFGTKQAVSSLRKGGRLPVYVAGVFFVIFVIIMYGEDIRSLTLDPIARAGTTPARIVEPVVTEERHVARVNPPRREVSSAEKAAALPLDVDERPKLATPTPTEAAKEVPKVEKIRKPKKPKTTKKKPRKPRPAKKTVAAAAGGLLGVPETCDLSKGEWVFDNTSYPLYREEQCEFLTSQVTCMRNGRRDDTYQKWRWQPKDCSMPRFDAKLFMERLRGKRFMFVGDSLNRNQWESMVCLVQSAMSPGKKYVTWEDQRVVFHAVEYNATVEFYWAPFLVESNSDDPKIHSIQHRIIKADAIAAHAQNWRGVDYLVFNTYIWWMNTLNMKIMRPGGQSWEEHDEVVRIEAYRKVLTTWASWVNDNIDPARTSVFFMSISPLHISPEVWGNPGGIRCAKETMPLLNWHGPIWLGTDWDMFHAAANVSRTAATRVPITFVDVTTMSERRKDGHTSVHTIRQGKVLTPEQQADPGTYADCIHWCLPGVPDIWNLILYTRIMSRPQLV</sequence>
<protein>
    <recommendedName>
        <fullName evidence="8">Xylan O-acetyltransferase 1</fullName>
        <ecNumber evidence="6">2.3.1.-</ecNumber>
    </recommendedName>
    <alternativeName>
        <fullName evidence="7">Protein trichome birefringence-like 12</fullName>
        <shortName evidence="7">OsTBL12</shortName>
    </alternativeName>
</protein>
<accession>Q8S237</accession>
<accession>Q0JI16</accession>
<name>XOAT1_ORYSJ</name>
<dbReference type="EC" id="2.3.1.-" evidence="6"/>
<dbReference type="EMBL" id="MH037015">
    <property type="protein sequence ID" value="AVR54505.1"/>
    <property type="molecule type" value="mRNA"/>
</dbReference>
<dbReference type="EMBL" id="AP003252">
    <property type="protein sequence ID" value="BAB89591.1"/>
    <property type="molecule type" value="Genomic_DNA"/>
</dbReference>
<dbReference type="EMBL" id="AP008207">
    <property type="protein sequence ID" value="BAF06612.1"/>
    <property type="molecule type" value="Genomic_DNA"/>
</dbReference>
<dbReference type="EMBL" id="AP014957">
    <property type="protein sequence ID" value="BAS75052.1"/>
    <property type="molecule type" value="Genomic_DNA"/>
</dbReference>
<dbReference type="EMBL" id="AK101671">
    <property type="protein sequence ID" value="BAG95179.1"/>
    <property type="molecule type" value="mRNA"/>
</dbReference>
<dbReference type="SMR" id="Q8S237"/>
<dbReference type="FunCoup" id="Q8S237">
    <property type="interactions" value="5"/>
</dbReference>
<dbReference type="STRING" id="39947.Q8S237"/>
<dbReference type="GlyCosmos" id="Q8S237">
    <property type="glycosylation" value="3 sites, No reported glycans"/>
</dbReference>
<dbReference type="PaxDb" id="39947-Q8S237"/>
<dbReference type="EnsemblPlants" id="Os01t0830700-01">
    <property type="protein sequence ID" value="Os01t0830700-01"/>
    <property type="gene ID" value="Os01g0830700"/>
</dbReference>
<dbReference type="EnsemblPlants" id="Os01t0830700-02">
    <property type="protein sequence ID" value="Os01t0830700-02"/>
    <property type="gene ID" value="Os01g0830700"/>
</dbReference>
<dbReference type="GeneID" id="4327430"/>
<dbReference type="Gramene" id="Os01t0830700-01">
    <property type="protein sequence ID" value="Os01t0830700-01"/>
    <property type="gene ID" value="Os01g0830700"/>
</dbReference>
<dbReference type="Gramene" id="Os01t0830700-02">
    <property type="protein sequence ID" value="Os01t0830700-02"/>
    <property type="gene ID" value="Os01g0830700"/>
</dbReference>
<dbReference type="KEGG" id="dosa:Os01g0830700"/>
<dbReference type="KEGG" id="osa:4327430"/>
<dbReference type="eggNOG" id="ENOG502SJAQ">
    <property type="taxonomic scope" value="Eukaryota"/>
</dbReference>
<dbReference type="HOGENOM" id="CLU_020953_3_2_1"/>
<dbReference type="InParanoid" id="Q8S237"/>
<dbReference type="OMA" id="ASWVNEN"/>
<dbReference type="OrthoDB" id="1932925at2759"/>
<dbReference type="Proteomes" id="UP000000763">
    <property type="component" value="Chromosome 1"/>
</dbReference>
<dbReference type="Proteomes" id="UP000059680">
    <property type="component" value="Chromosome 1"/>
</dbReference>
<dbReference type="GO" id="GO:0005794">
    <property type="term" value="C:Golgi apparatus"/>
    <property type="evidence" value="ECO:0000318"/>
    <property type="project" value="GO_Central"/>
</dbReference>
<dbReference type="GO" id="GO:0000139">
    <property type="term" value="C:Golgi membrane"/>
    <property type="evidence" value="ECO:0000250"/>
    <property type="project" value="UniProtKB"/>
</dbReference>
<dbReference type="GO" id="GO:0016413">
    <property type="term" value="F:O-acetyltransferase activity"/>
    <property type="evidence" value="ECO:0000318"/>
    <property type="project" value="GO_Central"/>
</dbReference>
<dbReference type="GO" id="GO:1990538">
    <property type="term" value="F:xylan O-acetyltransferase activity"/>
    <property type="evidence" value="ECO:0000314"/>
    <property type="project" value="UniProtKB"/>
</dbReference>
<dbReference type="GO" id="GO:1990937">
    <property type="term" value="P:xylan acetylation"/>
    <property type="evidence" value="ECO:0000314"/>
    <property type="project" value="UniProtKB"/>
</dbReference>
<dbReference type="InterPro" id="IPR029962">
    <property type="entry name" value="TBL"/>
</dbReference>
<dbReference type="InterPro" id="IPR026057">
    <property type="entry name" value="TBL_C"/>
</dbReference>
<dbReference type="InterPro" id="IPR025846">
    <property type="entry name" value="TBL_N"/>
</dbReference>
<dbReference type="PANTHER" id="PTHR32285">
    <property type="entry name" value="PROTEIN TRICHOME BIREFRINGENCE-LIKE 9-RELATED"/>
    <property type="match status" value="1"/>
</dbReference>
<dbReference type="PANTHER" id="PTHR32285:SF10">
    <property type="entry name" value="XYLAN O-ACETYLTRANSFERASE 1"/>
    <property type="match status" value="1"/>
</dbReference>
<dbReference type="Pfam" id="PF13839">
    <property type="entry name" value="PC-Esterase"/>
    <property type="match status" value="1"/>
</dbReference>
<dbReference type="Pfam" id="PF14416">
    <property type="entry name" value="PMR5N"/>
    <property type="match status" value="1"/>
</dbReference>